<sequence length="174" mass="19918">MIFWKNFFQNSNINASSEKNFKKLIVLDKTCDKIEFKDIYLSSNKNINLYELEQLCDSVGWVKRPLKKVKIALKNSSIIISLIQKKDANSKLVGFARATSDNGFNATIWDVVIHPDFQGLGLGKVVIHQLIQQLRQAEISTITLFAEPDVVSFYKKLGFIKDPDGVKGMFWYPR</sequence>
<name>YCF52_PYRYE</name>
<comment type="subcellular location">
    <subcellularLocation>
        <location>Plastid</location>
        <location>Chloroplast</location>
    </subcellularLocation>
</comment>
<comment type="similarity">
    <text evidence="2">Belongs to the acetyltransferase family. Ycf52 subfamily.</text>
</comment>
<accession>Q1XDU5</accession>
<protein>
    <recommendedName>
        <fullName>Uncharacterized N-acetyltransferase ycf52</fullName>
        <ecNumber>2.3.1.-</ecNumber>
    </recommendedName>
</protein>
<evidence type="ECO:0000255" key="1">
    <source>
        <dbReference type="PROSITE-ProRule" id="PRU00532"/>
    </source>
</evidence>
<evidence type="ECO:0000305" key="2"/>
<keyword id="KW-0012">Acyltransferase</keyword>
<keyword id="KW-0150">Chloroplast</keyword>
<keyword id="KW-0934">Plastid</keyword>
<keyword id="KW-0808">Transferase</keyword>
<dbReference type="EC" id="2.3.1.-"/>
<dbReference type="EMBL" id="AP006715">
    <property type="protein sequence ID" value="BAE92316.1"/>
    <property type="molecule type" value="Genomic_DNA"/>
</dbReference>
<dbReference type="RefSeq" id="YP_536873.1">
    <property type="nucleotide sequence ID" value="NC_007932.1"/>
</dbReference>
<dbReference type="SMR" id="Q1XDU5"/>
<dbReference type="GO" id="GO:0009507">
    <property type="term" value="C:chloroplast"/>
    <property type="evidence" value="ECO:0007669"/>
    <property type="project" value="UniProtKB-SubCell"/>
</dbReference>
<dbReference type="GO" id="GO:0008080">
    <property type="term" value="F:N-acetyltransferase activity"/>
    <property type="evidence" value="ECO:0007669"/>
    <property type="project" value="InterPro"/>
</dbReference>
<dbReference type="CDD" id="cd04301">
    <property type="entry name" value="NAT_SF"/>
    <property type="match status" value="1"/>
</dbReference>
<dbReference type="Gene3D" id="3.40.630.30">
    <property type="match status" value="1"/>
</dbReference>
<dbReference type="InterPro" id="IPR016181">
    <property type="entry name" value="Acyl_CoA_acyltransferase"/>
</dbReference>
<dbReference type="InterPro" id="IPR000182">
    <property type="entry name" value="GNAT_dom"/>
</dbReference>
<dbReference type="InterPro" id="IPR045039">
    <property type="entry name" value="NSI-like"/>
</dbReference>
<dbReference type="PANTHER" id="PTHR43626">
    <property type="entry name" value="ACYL-COA N-ACYLTRANSFERASE"/>
    <property type="match status" value="1"/>
</dbReference>
<dbReference type="PANTHER" id="PTHR43626:SF4">
    <property type="entry name" value="GCN5-RELATED N-ACETYLTRANSFERASE 2, CHLOROPLASTIC"/>
    <property type="match status" value="1"/>
</dbReference>
<dbReference type="Pfam" id="PF00583">
    <property type="entry name" value="Acetyltransf_1"/>
    <property type="match status" value="1"/>
</dbReference>
<dbReference type="SUPFAM" id="SSF55729">
    <property type="entry name" value="Acyl-CoA N-acyltransferases (Nat)"/>
    <property type="match status" value="1"/>
</dbReference>
<dbReference type="PROSITE" id="PS51186">
    <property type="entry name" value="GNAT"/>
    <property type="match status" value="1"/>
</dbReference>
<gene>
    <name type="primary">ycf52</name>
</gene>
<organism>
    <name type="scientific">Pyropia yezoensis</name>
    <name type="common">Susabi-nori</name>
    <name type="synonym">Porphyra yezoensis</name>
    <dbReference type="NCBI Taxonomy" id="2788"/>
    <lineage>
        <taxon>Eukaryota</taxon>
        <taxon>Rhodophyta</taxon>
        <taxon>Bangiophyceae</taxon>
        <taxon>Bangiales</taxon>
        <taxon>Bangiaceae</taxon>
        <taxon>Pyropia</taxon>
    </lineage>
</organism>
<reference key="1">
    <citation type="submission" date="2003-11" db="EMBL/GenBank/DDBJ databases">
        <title>Whole genome sequence of Porphyra yezoensis chloroplast.</title>
        <authorList>
            <person name="Kunimoto M."/>
            <person name="Morishima K."/>
            <person name="Yoshikawa M."/>
            <person name="Fukuda S."/>
            <person name="Kobayashi T."/>
            <person name="Kobayashi M."/>
            <person name="Okazaki T."/>
            <person name="Ohara I."/>
            <person name="Nakayama I."/>
        </authorList>
    </citation>
    <scope>NUCLEOTIDE SEQUENCE [LARGE SCALE GENOMIC DNA]</scope>
    <source>
        <strain>U-51</strain>
    </source>
</reference>
<feature type="chain" id="PRO_0000277311" description="Uncharacterized N-acetyltransferase ycf52">
    <location>
        <begin position="1"/>
        <end position="174"/>
    </location>
</feature>
<feature type="domain" description="N-acetyltransferase" evidence="1">
    <location>
        <begin position="42"/>
        <end position="174"/>
    </location>
</feature>
<proteinExistence type="inferred from homology"/>
<geneLocation type="chloroplast"/>